<gene>
    <name evidence="1" type="primary">hypA</name>
    <name type="ordered locus">PHG012</name>
</gene>
<organism>
    <name type="scientific">Cupriavidus necator (strain ATCC 17699 / DSM 428 / KCTC 22496 / NCIMB 10442 / H16 / Stanier 337)</name>
    <name type="common">Ralstonia eutropha</name>
    <dbReference type="NCBI Taxonomy" id="381666"/>
    <lineage>
        <taxon>Bacteria</taxon>
        <taxon>Pseudomonadati</taxon>
        <taxon>Pseudomonadota</taxon>
        <taxon>Betaproteobacteria</taxon>
        <taxon>Burkholderiales</taxon>
        <taxon>Burkholderiaceae</taxon>
        <taxon>Cupriavidus</taxon>
    </lineage>
</organism>
<sequence>MHELSLAGGILQLLEDAARRERFARVTLLRLEAGKLCGVEVRALRFALEAIASGTCLEGACIEIEEPEGQAWCLQCNAAVALAERGAPCSGCGGYRLQPTAGTELRVMDMLVEDHWCPE</sequence>
<comment type="function">
    <text evidence="1">Involved in the maturation of [NiFe] hydrogenases. Required for nickel insertion into the metal center of the hydrogenase.</text>
</comment>
<comment type="similarity">
    <text evidence="1 2">Belongs to the HypA/HybF family.</text>
</comment>
<dbReference type="EMBL" id="AY305378">
    <property type="protein sequence ID" value="AAP85768.1"/>
    <property type="molecule type" value="Genomic_DNA"/>
</dbReference>
<dbReference type="EMBL" id="X70183">
    <property type="protein sequence ID" value="CAA49730.1"/>
    <property type="molecule type" value="Genomic_DNA"/>
</dbReference>
<dbReference type="PIR" id="S29975">
    <property type="entry name" value="S29975"/>
</dbReference>
<dbReference type="RefSeq" id="WP_011153937.1">
    <property type="nucleotide sequence ID" value="NC_005241.1"/>
</dbReference>
<dbReference type="SMR" id="P31901"/>
<dbReference type="KEGG" id="reh:PHG012"/>
<dbReference type="eggNOG" id="COG0375">
    <property type="taxonomic scope" value="Bacteria"/>
</dbReference>
<dbReference type="HOGENOM" id="CLU_126929_0_0_4"/>
<dbReference type="OrthoDB" id="288014at2"/>
<dbReference type="Proteomes" id="UP000008210">
    <property type="component" value="Plasmid megaplasmid pHG1"/>
</dbReference>
<dbReference type="GO" id="GO:0016151">
    <property type="term" value="F:nickel cation binding"/>
    <property type="evidence" value="ECO:0007669"/>
    <property type="project" value="UniProtKB-UniRule"/>
</dbReference>
<dbReference type="GO" id="GO:0008270">
    <property type="term" value="F:zinc ion binding"/>
    <property type="evidence" value="ECO:0007669"/>
    <property type="project" value="UniProtKB-UniRule"/>
</dbReference>
<dbReference type="GO" id="GO:0051604">
    <property type="term" value="P:protein maturation"/>
    <property type="evidence" value="ECO:0007669"/>
    <property type="project" value="InterPro"/>
</dbReference>
<dbReference type="GO" id="GO:0036211">
    <property type="term" value="P:protein modification process"/>
    <property type="evidence" value="ECO:0007669"/>
    <property type="project" value="UniProtKB-UniRule"/>
</dbReference>
<dbReference type="Gene3D" id="3.30.2320.80">
    <property type="match status" value="1"/>
</dbReference>
<dbReference type="HAMAP" id="MF_00213">
    <property type="entry name" value="HypA_HybF"/>
    <property type="match status" value="1"/>
</dbReference>
<dbReference type="InterPro" id="IPR020538">
    <property type="entry name" value="Hydgase_Ni_incorp_HypA/HybF_CS"/>
</dbReference>
<dbReference type="InterPro" id="IPR000688">
    <property type="entry name" value="HypA/HybF"/>
</dbReference>
<dbReference type="PANTHER" id="PTHR34535">
    <property type="entry name" value="HYDROGENASE MATURATION FACTOR HYPA"/>
    <property type="match status" value="1"/>
</dbReference>
<dbReference type="PANTHER" id="PTHR34535:SF3">
    <property type="entry name" value="HYDROGENASE MATURATION FACTOR HYPA"/>
    <property type="match status" value="1"/>
</dbReference>
<dbReference type="Pfam" id="PF01155">
    <property type="entry name" value="HypA"/>
    <property type="match status" value="1"/>
</dbReference>
<dbReference type="PIRSF" id="PIRSF004761">
    <property type="entry name" value="Hydrgn_mat_HypA"/>
    <property type="match status" value="1"/>
</dbReference>
<dbReference type="PROSITE" id="PS01249">
    <property type="entry name" value="HYPA"/>
    <property type="match status" value="1"/>
</dbReference>
<reference key="1">
    <citation type="journal article" date="2003" name="J. Mol. Biol.">
        <title>Complete nucleotide sequence of pHG1: a Ralstonia eutropha H16 megaplasmid encoding key enzymes of H(2)-based lithoautotrophy and anaerobiosis.</title>
        <authorList>
            <person name="Schwartz E."/>
            <person name="Henne A."/>
            <person name="Cramm R."/>
            <person name="Eitinger T."/>
            <person name="Friedrich B."/>
            <person name="Gottschalk G."/>
        </authorList>
    </citation>
    <scope>NUCLEOTIDE SEQUENCE [LARGE SCALE GENOMIC DNA]</scope>
    <source>
        <strain>ATCC 17699 / DSM 428 / KCTC 22496 / NCIMB 10442 / H16 / Stanier 337</strain>
    </source>
</reference>
<reference key="2">
    <citation type="journal article" date="1993" name="Arch. Microbiol.">
        <title>Analysis of a pleiotropic gene region involved in formation of catalytically active hydrogenases in Alcaligenes eutrophus H16.</title>
        <authorList>
            <person name="Dernedde J."/>
            <person name="Eitinger M."/>
            <person name="Friedrich B."/>
        </authorList>
    </citation>
    <scope>NUCLEOTIDE SEQUENCE [GENOMIC DNA] OF 76-119</scope>
</reference>
<geneLocation type="plasmid">
    <name>megaplasmid pHG1</name>
</geneLocation>
<accession>P31901</accession>
<accession>Q7WXU2</accession>
<keyword id="KW-0479">Metal-binding</keyword>
<keyword id="KW-0533">Nickel</keyword>
<keyword id="KW-0614">Plasmid</keyword>
<keyword id="KW-1185">Reference proteome</keyword>
<keyword id="KW-0862">Zinc</keyword>
<proteinExistence type="inferred from homology"/>
<name>HYPA_CUPNH</name>
<feature type="chain" id="PRO_0000129030" description="Hydrogenase maturation factor HypA">
    <location>
        <begin position="1"/>
        <end position="119"/>
    </location>
</feature>
<feature type="binding site" evidence="1">
    <location>
        <position position="2"/>
    </location>
    <ligand>
        <name>Ni(2+)</name>
        <dbReference type="ChEBI" id="CHEBI:49786"/>
    </ligand>
</feature>
<feature type="binding site" evidence="1">
    <location>
        <position position="73"/>
    </location>
    <ligand>
        <name>Zn(2+)</name>
        <dbReference type="ChEBI" id="CHEBI:29105"/>
    </ligand>
</feature>
<feature type="binding site" evidence="1">
    <location>
        <position position="76"/>
    </location>
    <ligand>
        <name>Zn(2+)</name>
        <dbReference type="ChEBI" id="CHEBI:29105"/>
    </ligand>
</feature>
<feature type="binding site" evidence="1">
    <location>
        <position position="89"/>
    </location>
    <ligand>
        <name>Zn(2+)</name>
        <dbReference type="ChEBI" id="CHEBI:29105"/>
    </ligand>
</feature>
<feature type="binding site" evidence="1">
    <location>
        <position position="92"/>
    </location>
    <ligand>
        <name>Zn(2+)</name>
        <dbReference type="ChEBI" id="CHEBI:29105"/>
    </ligand>
</feature>
<evidence type="ECO:0000255" key="1">
    <source>
        <dbReference type="HAMAP-Rule" id="MF_00213"/>
    </source>
</evidence>
<evidence type="ECO:0000305" key="2"/>
<protein>
    <recommendedName>
        <fullName evidence="1">Hydrogenase maturation factor HypA</fullName>
    </recommendedName>
</protein>